<name>RK18_CYACA</name>
<dbReference type="EMBL" id="AF022186">
    <property type="protein sequence ID" value="AAF12922.1"/>
    <property type="status" value="ALT_FRAME"/>
    <property type="molecule type" value="Genomic_DNA"/>
</dbReference>
<dbReference type="RefSeq" id="NP_045172.1">
    <property type="nucleotide sequence ID" value="NC_001840.1"/>
</dbReference>
<dbReference type="SMR" id="Q9TLU7"/>
<dbReference type="GeneID" id="800269"/>
<dbReference type="GO" id="GO:0009507">
    <property type="term" value="C:chloroplast"/>
    <property type="evidence" value="ECO:0007669"/>
    <property type="project" value="UniProtKB-SubCell"/>
</dbReference>
<dbReference type="GO" id="GO:0022625">
    <property type="term" value="C:cytosolic large ribosomal subunit"/>
    <property type="evidence" value="ECO:0007669"/>
    <property type="project" value="TreeGrafter"/>
</dbReference>
<dbReference type="GO" id="GO:0008097">
    <property type="term" value="F:5S rRNA binding"/>
    <property type="evidence" value="ECO:0007669"/>
    <property type="project" value="TreeGrafter"/>
</dbReference>
<dbReference type="GO" id="GO:0003735">
    <property type="term" value="F:structural constituent of ribosome"/>
    <property type="evidence" value="ECO:0007669"/>
    <property type="project" value="InterPro"/>
</dbReference>
<dbReference type="GO" id="GO:0006412">
    <property type="term" value="P:translation"/>
    <property type="evidence" value="ECO:0007669"/>
    <property type="project" value="UniProtKB-UniRule"/>
</dbReference>
<dbReference type="CDD" id="cd00432">
    <property type="entry name" value="Ribosomal_L18_L5e"/>
    <property type="match status" value="1"/>
</dbReference>
<dbReference type="Gene3D" id="3.30.420.100">
    <property type="match status" value="1"/>
</dbReference>
<dbReference type="HAMAP" id="MF_01337_B">
    <property type="entry name" value="Ribosomal_uL18_B"/>
    <property type="match status" value="1"/>
</dbReference>
<dbReference type="InterPro" id="IPR004389">
    <property type="entry name" value="Ribosomal_uL18_bac-type"/>
</dbReference>
<dbReference type="InterPro" id="IPR005484">
    <property type="entry name" value="Ribosomal_uL18_bac/euk"/>
</dbReference>
<dbReference type="NCBIfam" id="TIGR00060">
    <property type="entry name" value="L18_bact"/>
    <property type="match status" value="1"/>
</dbReference>
<dbReference type="PANTHER" id="PTHR12899">
    <property type="entry name" value="39S RIBOSOMAL PROTEIN L18, MITOCHONDRIAL"/>
    <property type="match status" value="1"/>
</dbReference>
<dbReference type="PANTHER" id="PTHR12899:SF3">
    <property type="entry name" value="LARGE RIBOSOMAL SUBUNIT PROTEIN UL18M"/>
    <property type="match status" value="1"/>
</dbReference>
<dbReference type="Pfam" id="PF00861">
    <property type="entry name" value="Ribosomal_L18p"/>
    <property type="match status" value="1"/>
</dbReference>
<dbReference type="SUPFAM" id="SSF53137">
    <property type="entry name" value="Translational machinery components"/>
    <property type="match status" value="1"/>
</dbReference>
<protein>
    <recommendedName>
        <fullName evidence="2">Large ribosomal subunit protein uL18c</fullName>
    </recommendedName>
    <alternativeName>
        <fullName>50S ribosomal protein L18, chloroplastic</fullName>
    </alternativeName>
</protein>
<comment type="function">
    <text evidence="1">Binds 5S rRNA, forms part of the central protuberance of the 50S subunit.</text>
</comment>
<comment type="subunit">
    <text evidence="1">Part of the 50S ribosomal subunit; contacts the 5S rRNA.</text>
</comment>
<comment type="subcellular location">
    <subcellularLocation>
        <location>Plastid</location>
        <location>Chloroplast</location>
    </subcellularLocation>
</comment>
<comment type="similarity">
    <text evidence="2">Belongs to the universal ribosomal protein uL18 family.</text>
</comment>
<comment type="sequence caution" evidence="2">
    <conflict type="frameshift">
        <sequence resource="EMBL-CDS" id="AAF12922"/>
    </conflict>
</comment>
<organism>
    <name type="scientific">Cyanidium caldarium</name>
    <name type="common">Red alga</name>
    <dbReference type="NCBI Taxonomy" id="2771"/>
    <lineage>
        <taxon>Eukaryota</taxon>
        <taxon>Rhodophyta</taxon>
        <taxon>Bangiophyceae</taxon>
        <taxon>Cyanidiales</taxon>
        <taxon>Cyanidiaceae</taxon>
        <taxon>Cyanidium</taxon>
    </lineage>
</organism>
<sequence>MINDIKQLHKRYRLLVHLSNNHVYAQIIDDLNNRTVLSVSTLTPQVKSKLSITCNKKAAELVGEYVAQQALNFGIRNVVFDRGRKLYHGKVEVLANSARSFGLKF</sequence>
<accession>Q9TLU7</accession>
<proteinExistence type="inferred from homology"/>
<feature type="chain" id="PRO_0000131422" description="Large ribosomal subunit protein uL18c">
    <location>
        <begin position="1"/>
        <end position="105"/>
    </location>
</feature>
<evidence type="ECO:0000250" key="1"/>
<evidence type="ECO:0000305" key="2"/>
<geneLocation type="chloroplast"/>
<keyword id="KW-0150">Chloroplast</keyword>
<keyword id="KW-0934">Plastid</keyword>
<keyword id="KW-0687">Ribonucleoprotein</keyword>
<keyword id="KW-0689">Ribosomal protein</keyword>
<keyword id="KW-0694">RNA-binding</keyword>
<keyword id="KW-0699">rRNA-binding</keyword>
<reference key="1">
    <citation type="journal article" date="2000" name="J. Mol. Evol.">
        <title>The structure and gene repertoire of an ancient red algal plastid genome.</title>
        <authorList>
            <person name="Gloeckner G."/>
            <person name="Rosenthal A."/>
            <person name="Valentin K.-U."/>
        </authorList>
    </citation>
    <scope>NUCLEOTIDE SEQUENCE [LARGE SCALE GENOMIC DNA]</scope>
    <source>
        <strain>RK-1</strain>
    </source>
</reference>
<gene>
    <name type="primary">rpl18</name>
</gene>